<keyword id="KW-0997">Cell inner membrane</keyword>
<keyword id="KW-1003">Cell membrane</keyword>
<keyword id="KW-0472">Membrane</keyword>
<keyword id="KW-0520">NAD</keyword>
<keyword id="KW-0874">Quinone</keyword>
<keyword id="KW-1278">Translocase</keyword>
<keyword id="KW-0813">Transport</keyword>
<keyword id="KW-0830">Ubiquinone</keyword>
<proteinExistence type="inferred from homology"/>
<organism>
    <name type="scientific">Xanthomonas oryzae pv. oryzae (strain MAFF 311018)</name>
    <dbReference type="NCBI Taxonomy" id="342109"/>
    <lineage>
        <taxon>Bacteria</taxon>
        <taxon>Pseudomonadati</taxon>
        <taxon>Pseudomonadota</taxon>
        <taxon>Gammaproteobacteria</taxon>
        <taxon>Lysobacterales</taxon>
        <taxon>Lysobacteraceae</taxon>
        <taxon>Xanthomonas</taxon>
    </lineage>
</organism>
<evidence type="ECO:0000255" key="1">
    <source>
        <dbReference type="HAMAP-Rule" id="MF_01358"/>
    </source>
</evidence>
<gene>
    <name evidence="1" type="primary">nuoD</name>
    <name type="ordered locus">XOO3064</name>
</gene>
<protein>
    <recommendedName>
        <fullName evidence="1">NADH-quinone oxidoreductase subunit D</fullName>
        <ecNumber evidence="1">7.1.1.-</ecNumber>
    </recommendedName>
    <alternativeName>
        <fullName evidence="1">NADH dehydrogenase I subunit D</fullName>
    </alternativeName>
    <alternativeName>
        <fullName evidence="1">NDH-1 subunit D</fullName>
    </alternativeName>
</protein>
<name>NUOD_XANOM</name>
<comment type="function">
    <text evidence="1">NDH-1 shuttles electrons from NADH, via FMN and iron-sulfur (Fe-S) centers, to quinones in the respiratory chain. The immediate electron acceptor for the enzyme in this species is believed to be ubiquinone. Couples the redox reaction to proton translocation (for every two electrons transferred, four hydrogen ions are translocated across the cytoplasmic membrane), and thus conserves the redox energy in a proton gradient.</text>
</comment>
<comment type="catalytic activity">
    <reaction evidence="1">
        <text>a quinone + NADH + 5 H(+)(in) = a quinol + NAD(+) + 4 H(+)(out)</text>
        <dbReference type="Rhea" id="RHEA:57888"/>
        <dbReference type="ChEBI" id="CHEBI:15378"/>
        <dbReference type="ChEBI" id="CHEBI:24646"/>
        <dbReference type="ChEBI" id="CHEBI:57540"/>
        <dbReference type="ChEBI" id="CHEBI:57945"/>
        <dbReference type="ChEBI" id="CHEBI:132124"/>
    </reaction>
</comment>
<comment type="subunit">
    <text evidence="1">NDH-1 is composed of 14 different subunits. Subunits NuoB, C, D, E, F, and G constitute the peripheral sector of the complex.</text>
</comment>
<comment type="subcellular location">
    <subcellularLocation>
        <location evidence="1">Cell inner membrane</location>
        <topology evidence="1">Peripheral membrane protein</topology>
        <orientation evidence="1">Cytoplasmic side</orientation>
    </subcellularLocation>
</comment>
<comment type="similarity">
    <text evidence="1">Belongs to the complex I 49 kDa subunit family.</text>
</comment>
<feature type="chain" id="PRO_0000357956" description="NADH-quinone oxidoreductase subunit D">
    <location>
        <begin position="1"/>
        <end position="435"/>
    </location>
</feature>
<reference key="1">
    <citation type="journal article" date="2005" name="Jpn. Agric. Res. Q.">
        <title>Genome sequence of Xanthomonas oryzae pv. oryzae suggests contribution of large numbers of effector genes and insertion sequences to its race diversity.</title>
        <authorList>
            <person name="Ochiai H."/>
            <person name="Inoue Y."/>
            <person name="Takeya M."/>
            <person name="Sasaki A."/>
            <person name="Kaku H."/>
        </authorList>
    </citation>
    <scope>NUCLEOTIDE SEQUENCE [LARGE SCALE GENOMIC DNA]</scope>
    <source>
        <strain>MAFF 311018</strain>
    </source>
</reference>
<dbReference type="EC" id="7.1.1.-" evidence="1"/>
<dbReference type="EMBL" id="AP008229">
    <property type="protein sequence ID" value="BAE69819.1"/>
    <property type="molecule type" value="Genomic_DNA"/>
</dbReference>
<dbReference type="RefSeq" id="WP_011259748.1">
    <property type="nucleotide sequence ID" value="NC_007705.1"/>
</dbReference>
<dbReference type="SMR" id="Q2P0V8"/>
<dbReference type="KEGG" id="xom:XOO3064"/>
<dbReference type="HOGENOM" id="CLU_015134_1_1_6"/>
<dbReference type="GO" id="GO:0005886">
    <property type="term" value="C:plasma membrane"/>
    <property type="evidence" value="ECO:0007669"/>
    <property type="project" value="UniProtKB-SubCell"/>
</dbReference>
<dbReference type="GO" id="GO:0051287">
    <property type="term" value="F:NAD binding"/>
    <property type="evidence" value="ECO:0007669"/>
    <property type="project" value="InterPro"/>
</dbReference>
<dbReference type="GO" id="GO:0050136">
    <property type="term" value="F:NADH:ubiquinone reductase (non-electrogenic) activity"/>
    <property type="evidence" value="ECO:0007669"/>
    <property type="project" value="UniProtKB-UniRule"/>
</dbReference>
<dbReference type="GO" id="GO:0048038">
    <property type="term" value="F:quinone binding"/>
    <property type="evidence" value="ECO:0007669"/>
    <property type="project" value="UniProtKB-KW"/>
</dbReference>
<dbReference type="FunFam" id="1.10.645.10:FF:000005">
    <property type="entry name" value="NADH-quinone oxidoreductase subunit D"/>
    <property type="match status" value="1"/>
</dbReference>
<dbReference type="Gene3D" id="1.10.645.10">
    <property type="entry name" value="Cytochrome-c3 Hydrogenase, chain B"/>
    <property type="match status" value="1"/>
</dbReference>
<dbReference type="HAMAP" id="MF_01358">
    <property type="entry name" value="NDH1_NuoD"/>
    <property type="match status" value="1"/>
</dbReference>
<dbReference type="InterPro" id="IPR001135">
    <property type="entry name" value="NADH_Q_OxRdtase_suD"/>
</dbReference>
<dbReference type="InterPro" id="IPR014029">
    <property type="entry name" value="NADH_UbQ_OxRdtase_49kDa_CS"/>
</dbReference>
<dbReference type="InterPro" id="IPR022885">
    <property type="entry name" value="NDH1_su_D/H"/>
</dbReference>
<dbReference type="InterPro" id="IPR029014">
    <property type="entry name" value="NiFe-Hase_large"/>
</dbReference>
<dbReference type="NCBIfam" id="TIGR01962">
    <property type="entry name" value="NuoD"/>
    <property type="match status" value="1"/>
</dbReference>
<dbReference type="NCBIfam" id="NF004739">
    <property type="entry name" value="PRK06075.1"/>
    <property type="match status" value="1"/>
</dbReference>
<dbReference type="PANTHER" id="PTHR11993:SF10">
    <property type="entry name" value="NADH DEHYDROGENASE [UBIQUINONE] IRON-SULFUR PROTEIN 2, MITOCHONDRIAL"/>
    <property type="match status" value="1"/>
</dbReference>
<dbReference type="PANTHER" id="PTHR11993">
    <property type="entry name" value="NADH-UBIQUINONE OXIDOREDUCTASE 49 KDA SUBUNIT"/>
    <property type="match status" value="1"/>
</dbReference>
<dbReference type="Pfam" id="PF00346">
    <property type="entry name" value="Complex1_49kDa"/>
    <property type="match status" value="1"/>
</dbReference>
<dbReference type="SUPFAM" id="SSF56762">
    <property type="entry name" value="HydB/Nqo4-like"/>
    <property type="match status" value="1"/>
</dbReference>
<dbReference type="PROSITE" id="PS00535">
    <property type="entry name" value="COMPLEX1_49K"/>
    <property type="match status" value="1"/>
</dbReference>
<sequence length="435" mass="49431">MSEFRQATDAFASNPAESKQEIRNYTMNFGPQHPAAHGVLRLILEMDGETVVRADPHIGLLHRGTEKLAESKPFNQSVPYMDRLDYVSMMCNEHAYVRAIESLMGIEAPERAQYIRTMFDEITRIKNHLMWVGSNALDLGAMAVMLYAFREREELMDVYEAVSGARMHAAYYRPGGVYRDLPDRMPRYKESRWHKGGALKKLNAAREGSMLDFLEDFTNTFPLRVDEYETLLTDNRIWKQRTVDVGIISPDLARAWGMTGPMLRGSGIEWDLRKKQPYAKYDAVDFDIPVGTNGDCYDRYLVRVAEMRESNRIIKQCVKWLKANPGPVMVTNFKVAPPSREGMKDDMEALIHHFKLFSEGYCVPAGETYSAVEAPKGEFGCYLMSDGANKPFRVHLRAPGFAHLSSMDAVVRGYLLADVVAMIGTYDLVFGEVDR</sequence>
<accession>Q2P0V8</accession>